<proteinExistence type="predicted"/>
<dbReference type="EMBL" id="L43967">
    <property type="protein sequence ID" value="AAC71603.1"/>
    <property type="molecule type" value="Genomic_DNA"/>
</dbReference>
<dbReference type="PIR" id="F64241">
    <property type="entry name" value="F64241"/>
</dbReference>
<dbReference type="RefSeq" id="WP_009885939.1">
    <property type="nucleotide sequence ID" value="NC_000908.2"/>
</dbReference>
<dbReference type="SMR" id="P47616"/>
<dbReference type="STRING" id="243273.MG_376"/>
<dbReference type="GeneID" id="88282559"/>
<dbReference type="KEGG" id="mge:MG_376"/>
<dbReference type="eggNOG" id="ENOG5031YRE">
    <property type="taxonomic scope" value="Bacteria"/>
</dbReference>
<dbReference type="HOGENOM" id="CLU_2330709_0_0_14"/>
<dbReference type="InParanoid" id="P47616"/>
<dbReference type="OrthoDB" id="399263at2"/>
<dbReference type="BioCyc" id="MGEN243273:G1GJ2-470-MONOMER"/>
<dbReference type="Proteomes" id="UP000000807">
    <property type="component" value="Chromosome"/>
</dbReference>
<dbReference type="Gene3D" id="2.40.50.140">
    <property type="entry name" value="Nucleic acid-binding proteins"/>
    <property type="match status" value="1"/>
</dbReference>
<dbReference type="InterPro" id="IPR024506">
    <property type="entry name" value="DUF3217"/>
</dbReference>
<dbReference type="InterPro" id="IPR012340">
    <property type="entry name" value="NA-bd_OB-fold"/>
</dbReference>
<dbReference type="Pfam" id="PF11506">
    <property type="entry name" value="DUF3217"/>
    <property type="match status" value="1"/>
</dbReference>
<accession>P47616</accession>
<reference key="1">
    <citation type="journal article" date="1995" name="Science">
        <title>The minimal gene complement of Mycoplasma genitalium.</title>
        <authorList>
            <person name="Fraser C.M."/>
            <person name="Gocayne J.D."/>
            <person name="White O."/>
            <person name="Adams M.D."/>
            <person name="Clayton R.A."/>
            <person name="Fleischmann R.D."/>
            <person name="Bult C.J."/>
            <person name="Kerlavage A.R."/>
            <person name="Sutton G.G."/>
            <person name="Kelley J.M."/>
            <person name="Fritchman J.L."/>
            <person name="Weidman J.F."/>
            <person name="Small K.V."/>
            <person name="Sandusky M."/>
            <person name="Fuhrmann J.L."/>
            <person name="Nguyen D.T."/>
            <person name="Utterback T.R."/>
            <person name="Saudek D.M."/>
            <person name="Phillips C.A."/>
            <person name="Merrick J.M."/>
            <person name="Tomb J.-F."/>
            <person name="Dougherty B.A."/>
            <person name="Bott K.F."/>
            <person name="Hu P.-C."/>
            <person name="Lucier T.S."/>
            <person name="Peterson S.N."/>
            <person name="Smith H.O."/>
            <person name="Hutchison C.A. III"/>
            <person name="Venter J.C."/>
        </authorList>
    </citation>
    <scope>NUCLEOTIDE SEQUENCE [LARGE SCALE GENOMIC DNA]</scope>
    <source>
        <strain>ATCC 33530 / DSM 19775 / NCTC 10195 / G37</strain>
    </source>
</reference>
<name>Y376_MYCGE</name>
<sequence length="104" mass="12231">MLNCVFLEGEIESTKWSHKKTGFLVTIKQKRLFGERSFTDFFVFYANGQLAFELEAYTQKFKTISIEGILRTYLEKRSGIWKTTIEVVKIMKPNSKVMIDYQES</sequence>
<keyword id="KW-1185">Reference proteome</keyword>
<gene>
    <name type="ordered locus">MG376</name>
</gene>
<feature type="chain" id="PRO_0000210578" description="Uncharacterized protein MG376">
    <location>
        <begin position="1"/>
        <end position="104"/>
    </location>
</feature>
<organism>
    <name type="scientific">Mycoplasma genitalium (strain ATCC 33530 / DSM 19775 / NCTC 10195 / G37)</name>
    <name type="common">Mycoplasmoides genitalium</name>
    <dbReference type="NCBI Taxonomy" id="243273"/>
    <lineage>
        <taxon>Bacteria</taxon>
        <taxon>Bacillati</taxon>
        <taxon>Mycoplasmatota</taxon>
        <taxon>Mycoplasmoidales</taxon>
        <taxon>Mycoplasmoidaceae</taxon>
        <taxon>Mycoplasmoides</taxon>
    </lineage>
</organism>
<protein>
    <recommendedName>
        <fullName>Uncharacterized protein MG376</fullName>
    </recommendedName>
</protein>